<proteinExistence type="inferred from homology"/>
<gene>
    <name evidence="1" type="primary">rpsC</name>
    <name type="ordered locus">MSC_0739</name>
</gene>
<comment type="function">
    <text evidence="1">Binds the lower part of the 30S subunit head. Binds mRNA in the 70S ribosome, positioning it for translation.</text>
</comment>
<comment type="subunit">
    <text evidence="1">Part of the 30S ribosomal subunit. Forms a tight complex with proteins S10 and S14.</text>
</comment>
<comment type="similarity">
    <text evidence="1">Belongs to the universal ribosomal protein uS3 family.</text>
</comment>
<sequence length="233" mass="26216">MGQKVSPNVLRLGIVRDWENRWYAEKDQYVKWLDQDIKIRTALFKLLKDAAVSKIDIERTTKDLTLFIKTARPAIVLGQEGKNIEKIVLAVRKTVKNKKLIVNVRVIEIKSPDADATLVARWIGEQISNRASFRTVQKLAIKKALKAGAKGIKTAVSGRLGGVEMARTEGYLEGSVPLSTLRNNIDYALYEAPTTYGQIGVKVWINHGEVFKKERMNNSQIMAKPRTNKGGKR</sequence>
<dbReference type="EMBL" id="BX293980">
    <property type="protein sequence ID" value="CAE77357.1"/>
    <property type="molecule type" value="Genomic_DNA"/>
</dbReference>
<dbReference type="RefSeq" id="NP_975715.1">
    <property type="nucleotide sequence ID" value="NC_005364.2"/>
</dbReference>
<dbReference type="RefSeq" id="WP_011166907.1">
    <property type="nucleotide sequence ID" value="NC_005364.2"/>
</dbReference>
<dbReference type="SMR" id="Q6MSN1"/>
<dbReference type="STRING" id="272632.MSC_0739"/>
<dbReference type="GeneID" id="93426139"/>
<dbReference type="KEGG" id="mmy:MSC_0739"/>
<dbReference type="PATRIC" id="fig|272632.4.peg.796"/>
<dbReference type="eggNOG" id="COG0092">
    <property type="taxonomic scope" value="Bacteria"/>
</dbReference>
<dbReference type="HOGENOM" id="CLU_058591_0_2_14"/>
<dbReference type="PRO" id="PR:Q6MSN1"/>
<dbReference type="Proteomes" id="UP000001016">
    <property type="component" value="Chromosome"/>
</dbReference>
<dbReference type="GO" id="GO:0022627">
    <property type="term" value="C:cytosolic small ribosomal subunit"/>
    <property type="evidence" value="ECO:0007669"/>
    <property type="project" value="TreeGrafter"/>
</dbReference>
<dbReference type="GO" id="GO:0003729">
    <property type="term" value="F:mRNA binding"/>
    <property type="evidence" value="ECO:0007669"/>
    <property type="project" value="UniProtKB-UniRule"/>
</dbReference>
<dbReference type="GO" id="GO:0019843">
    <property type="term" value="F:rRNA binding"/>
    <property type="evidence" value="ECO:0007669"/>
    <property type="project" value="UniProtKB-UniRule"/>
</dbReference>
<dbReference type="GO" id="GO:0003735">
    <property type="term" value="F:structural constituent of ribosome"/>
    <property type="evidence" value="ECO:0007669"/>
    <property type="project" value="InterPro"/>
</dbReference>
<dbReference type="GO" id="GO:0006412">
    <property type="term" value="P:translation"/>
    <property type="evidence" value="ECO:0007669"/>
    <property type="project" value="UniProtKB-UniRule"/>
</dbReference>
<dbReference type="CDD" id="cd02412">
    <property type="entry name" value="KH-II_30S_S3"/>
    <property type="match status" value="1"/>
</dbReference>
<dbReference type="FunFam" id="3.30.300.20:FF:000001">
    <property type="entry name" value="30S ribosomal protein S3"/>
    <property type="match status" value="1"/>
</dbReference>
<dbReference type="Gene3D" id="3.30.300.20">
    <property type="match status" value="1"/>
</dbReference>
<dbReference type="Gene3D" id="3.30.1140.32">
    <property type="entry name" value="Ribosomal protein S3, C-terminal domain"/>
    <property type="match status" value="1"/>
</dbReference>
<dbReference type="HAMAP" id="MF_01309_B">
    <property type="entry name" value="Ribosomal_uS3_B"/>
    <property type="match status" value="1"/>
</dbReference>
<dbReference type="InterPro" id="IPR004087">
    <property type="entry name" value="KH_dom"/>
</dbReference>
<dbReference type="InterPro" id="IPR015946">
    <property type="entry name" value="KH_dom-like_a/b"/>
</dbReference>
<dbReference type="InterPro" id="IPR004044">
    <property type="entry name" value="KH_dom_type_2"/>
</dbReference>
<dbReference type="InterPro" id="IPR009019">
    <property type="entry name" value="KH_sf_prok-type"/>
</dbReference>
<dbReference type="InterPro" id="IPR036419">
    <property type="entry name" value="Ribosomal_S3_C_sf"/>
</dbReference>
<dbReference type="InterPro" id="IPR005704">
    <property type="entry name" value="Ribosomal_uS3_bac-typ"/>
</dbReference>
<dbReference type="InterPro" id="IPR001351">
    <property type="entry name" value="Ribosomal_uS3_C"/>
</dbReference>
<dbReference type="InterPro" id="IPR018280">
    <property type="entry name" value="Ribosomal_uS3_CS"/>
</dbReference>
<dbReference type="NCBIfam" id="TIGR01009">
    <property type="entry name" value="rpsC_bact"/>
    <property type="match status" value="1"/>
</dbReference>
<dbReference type="PANTHER" id="PTHR11760">
    <property type="entry name" value="30S/40S RIBOSOMAL PROTEIN S3"/>
    <property type="match status" value="1"/>
</dbReference>
<dbReference type="PANTHER" id="PTHR11760:SF19">
    <property type="entry name" value="SMALL RIBOSOMAL SUBUNIT PROTEIN US3C"/>
    <property type="match status" value="1"/>
</dbReference>
<dbReference type="Pfam" id="PF07650">
    <property type="entry name" value="KH_2"/>
    <property type="match status" value="1"/>
</dbReference>
<dbReference type="Pfam" id="PF00189">
    <property type="entry name" value="Ribosomal_S3_C"/>
    <property type="match status" value="1"/>
</dbReference>
<dbReference type="SMART" id="SM00322">
    <property type="entry name" value="KH"/>
    <property type="match status" value="1"/>
</dbReference>
<dbReference type="SUPFAM" id="SSF54814">
    <property type="entry name" value="Prokaryotic type KH domain (KH-domain type II)"/>
    <property type="match status" value="1"/>
</dbReference>
<dbReference type="SUPFAM" id="SSF54821">
    <property type="entry name" value="Ribosomal protein S3 C-terminal domain"/>
    <property type="match status" value="1"/>
</dbReference>
<dbReference type="PROSITE" id="PS50823">
    <property type="entry name" value="KH_TYPE_2"/>
    <property type="match status" value="1"/>
</dbReference>
<dbReference type="PROSITE" id="PS00548">
    <property type="entry name" value="RIBOSOMAL_S3"/>
    <property type="match status" value="1"/>
</dbReference>
<keyword id="KW-1185">Reference proteome</keyword>
<keyword id="KW-0687">Ribonucleoprotein</keyword>
<keyword id="KW-0689">Ribosomal protein</keyword>
<keyword id="KW-0694">RNA-binding</keyword>
<keyword id="KW-0699">rRNA-binding</keyword>
<name>RS3_MYCMS</name>
<accession>Q6MSN1</accession>
<evidence type="ECO:0000255" key="1">
    <source>
        <dbReference type="HAMAP-Rule" id="MF_01309"/>
    </source>
</evidence>
<evidence type="ECO:0000305" key="2"/>
<reference key="1">
    <citation type="journal article" date="2004" name="Genome Res.">
        <title>The genome sequence of Mycoplasma mycoides subsp. mycoides SC type strain PG1T, the causative agent of contagious bovine pleuropneumonia (CBPP).</title>
        <authorList>
            <person name="Westberg J."/>
            <person name="Persson A."/>
            <person name="Holmberg A."/>
            <person name="Goesmann A."/>
            <person name="Lundeberg J."/>
            <person name="Johansson K.-E."/>
            <person name="Pettersson B."/>
            <person name="Uhlen M."/>
        </authorList>
    </citation>
    <scope>NUCLEOTIDE SEQUENCE [LARGE SCALE GENOMIC DNA]</scope>
    <source>
        <strain>CCUG 32753 / NCTC 10114 / PG1</strain>
    </source>
</reference>
<organism>
    <name type="scientific">Mycoplasma mycoides subsp. mycoides SC (strain CCUG 32753 / NCTC 10114 / PG1)</name>
    <dbReference type="NCBI Taxonomy" id="272632"/>
    <lineage>
        <taxon>Bacteria</taxon>
        <taxon>Bacillati</taxon>
        <taxon>Mycoplasmatota</taxon>
        <taxon>Mollicutes</taxon>
        <taxon>Mycoplasmataceae</taxon>
        <taxon>Mycoplasma</taxon>
    </lineage>
</organism>
<feature type="chain" id="PRO_0000130154" description="Small ribosomal subunit protein uS3">
    <location>
        <begin position="1"/>
        <end position="233"/>
    </location>
</feature>
<feature type="domain" description="KH type-2" evidence="1">
    <location>
        <begin position="39"/>
        <end position="108"/>
    </location>
</feature>
<protein>
    <recommendedName>
        <fullName evidence="1">Small ribosomal subunit protein uS3</fullName>
    </recommendedName>
    <alternativeName>
        <fullName evidence="2">30S ribosomal protein S3</fullName>
    </alternativeName>
</protein>